<proteinExistence type="evidence at protein level"/>
<evidence type="ECO:0000255" key="1"/>
<evidence type="ECO:0000255" key="2">
    <source>
        <dbReference type="PROSITE-ProRule" id="PRU00082"/>
    </source>
</evidence>
<evidence type="ECO:0000269" key="3">
    <source>
    </source>
</evidence>
<evidence type="ECO:0000269" key="4">
    <source>
    </source>
</evidence>
<evidence type="ECO:0000269" key="5">
    <source>
    </source>
</evidence>
<evidence type="ECO:0000269" key="6">
    <source>
    </source>
</evidence>
<evidence type="ECO:0007829" key="7">
    <source>
        <dbReference type="PDB" id="1O70"/>
    </source>
</evidence>
<name>FAS1_DROME</name>
<accession>P10674</accession>
<comment type="function">
    <text>Neural cell adhesion molecule.</text>
</comment>
<comment type="subcellular location">
    <subcellularLocation>
        <location>Cell membrane</location>
        <topology>Lipid-anchor</topology>
        <topology>GPI-anchor</topology>
    </subcellularLocation>
</comment>
<comment type="alternative products">
    <event type="alternative splicing"/>
    <isoform>
        <id>P10674-1</id>
        <name>1</name>
        <sequence type="displayed"/>
    </isoform>
    <text evidence="4">Many isoforms are produced by alternative splicing.</text>
</comment>
<comment type="tissue specificity">
    <text>Expressed on different subsets of axon bundles (fascicles) in insect embryos.</text>
</comment>
<dbReference type="EMBL" id="M20545">
    <property type="protein sequence ID" value="AAA28531.1"/>
    <property type="molecule type" value="mRNA"/>
</dbReference>
<dbReference type="EMBL" id="M32311">
    <property type="protein sequence ID" value="AAA28529.1"/>
    <property type="molecule type" value="Genomic_DNA"/>
</dbReference>
<dbReference type="EMBL" id="AE014297">
    <property type="protein sequence ID" value="AAN13715.1"/>
    <property type="molecule type" value="Genomic_DNA"/>
</dbReference>
<dbReference type="PIR" id="B29900">
    <property type="entry name" value="B29900"/>
</dbReference>
<dbReference type="RefSeq" id="NP_732165.1">
    <molecule id="P10674-1"/>
    <property type="nucleotide sequence ID" value="NM_169725.2"/>
</dbReference>
<dbReference type="PDB" id="1O70">
    <property type="method" value="X-ray"/>
    <property type="resolution" value="2.60 A"/>
    <property type="chains" value="A=314-628"/>
</dbReference>
<dbReference type="PDBsum" id="1O70"/>
<dbReference type="SMR" id="P10674"/>
<dbReference type="BioGRID" id="67070">
    <property type="interactions" value="9"/>
</dbReference>
<dbReference type="FunCoup" id="P10674">
    <property type="interactions" value="66"/>
</dbReference>
<dbReference type="IntAct" id="P10674">
    <property type="interactions" value="1"/>
</dbReference>
<dbReference type="STRING" id="7227.FBpp0111715"/>
<dbReference type="GlyCosmos" id="P10674">
    <property type="glycosylation" value="5 sites, No reported glycans"/>
</dbReference>
<dbReference type="GlyGen" id="P10674">
    <property type="glycosylation" value="6 sites, 1 O-linked glycan (1 site)"/>
</dbReference>
<dbReference type="iPTMnet" id="P10674"/>
<dbReference type="PaxDb" id="7227-FBpp0111715"/>
<dbReference type="DNASU" id="42025"/>
<dbReference type="EnsemblMetazoa" id="FBtr0083333">
    <molecule id="P10674-1"/>
    <property type="protein sequence ID" value="FBpp0082783"/>
    <property type="gene ID" value="FBgn0285925"/>
</dbReference>
<dbReference type="GeneID" id="42025"/>
<dbReference type="KEGG" id="dme:Dmel_CG6588"/>
<dbReference type="AGR" id="FB:FBgn0285925"/>
<dbReference type="CTD" id="42025"/>
<dbReference type="FlyBase" id="FBgn0285925">
    <property type="gene designation" value="Fas1"/>
</dbReference>
<dbReference type="VEuPathDB" id="VectorBase:FBgn0285925"/>
<dbReference type="eggNOG" id="KOG1437">
    <property type="taxonomic scope" value="Eukaryota"/>
</dbReference>
<dbReference type="GeneTree" id="ENSGT00530000063860"/>
<dbReference type="InParanoid" id="P10674"/>
<dbReference type="OrthoDB" id="7700931at2759"/>
<dbReference type="PhylomeDB" id="P10674"/>
<dbReference type="SignaLink" id="P10674"/>
<dbReference type="BioGRID-ORCS" id="42025">
    <property type="hits" value="0 hits in 1 CRISPR screen"/>
</dbReference>
<dbReference type="ChiTaRS" id="Fas1">
    <property type="organism name" value="fly"/>
</dbReference>
<dbReference type="EvolutionaryTrace" id="P10674"/>
<dbReference type="GenomeRNAi" id="42025"/>
<dbReference type="PRO" id="PR:P10674"/>
<dbReference type="Proteomes" id="UP000000803">
    <property type="component" value="Chromosome 3R"/>
</dbReference>
<dbReference type="Bgee" id="FBgn0285925">
    <property type="expression patterns" value="Expressed in proximal medullary amacrine neuron Pm2 (Drosophila) in insect head and 270 other cell types or tissues"/>
</dbReference>
<dbReference type="ExpressionAtlas" id="P10674">
    <property type="expression patterns" value="baseline and differential"/>
</dbReference>
<dbReference type="GO" id="GO:0031012">
    <property type="term" value="C:extracellular matrix"/>
    <property type="evidence" value="ECO:0000318"/>
    <property type="project" value="GO_Central"/>
</dbReference>
<dbReference type="GO" id="GO:0005615">
    <property type="term" value="C:extracellular space"/>
    <property type="evidence" value="ECO:0000318"/>
    <property type="project" value="GO_Central"/>
</dbReference>
<dbReference type="GO" id="GO:0005886">
    <property type="term" value="C:plasma membrane"/>
    <property type="evidence" value="ECO:0000314"/>
    <property type="project" value="FlyBase"/>
</dbReference>
<dbReference type="GO" id="GO:0098552">
    <property type="term" value="C:side of membrane"/>
    <property type="evidence" value="ECO:0007669"/>
    <property type="project" value="UniProtKB-KW"/>
</dbReference>
<dbReference type="GO" id="GO:0050839">
    <property type="term" value="F:cell adhesion molecule binding"/>
    <property type="evidence" value="ECO:0000314"/>
    <property type="project" value="FlyBase"/>
</dbReference>
<dbReference type="GO" id="GO:0007411">
    <property type="term" value="P:axon guidance"/>
    <property type="evidence" value="ECO:0000316"/>
    <property type="project" value="FlyBase"/>
</dbReference>
<dbReference type="GO" id="GO:0016338">
    <property type="term" value="P:calcium-independent cell-cell adhesion via plasma membrane cell-adhesion molecules"/>
    <property type="evidence" value="ECO:0000314"/>
    <property type="project" value="FlyBase"/>
</dbReference>
<dbReference type="GO" id="GO:0007155">
    <property type="term" value="P:cell adhesion"/>
    <property type="evidence" value="ECO:0000318"/>
    <property type="project" value="GO_Central"/>
</dbReference>
<dbReference type="GO" id="GO:0030198">
    <property type="term" value="P:extracellular matrix organization"/>
    <property type="evidence" value="ECO:0000318"/>
    <property type="project" value="GO_Central"/>
</dbReference>
<dbReference type="GO" id="GO:0007156">
    <property type="term" value="P:homophilic cell adhesion via plasma membrane adhesion molecules"/>
    <property type="evidence" value="ECO:0000314"/>
    <property type="project" value="FlyBase"/>
</dbReference>
<dbReference type="GO" id="GO:0008038">
    <property type="term" value="P:neuron recognition"/>
    <property type="evidence" value="ECO:0000314"/>
    <property type="project" value="FlyBase"/>
</dbReference>
<dbReference type="FunFam" id="2.30.180.10:FF:000039">
    <property type="entry name" value="Fasciclin 1, isoform F"/>
    <property type="match status" value="1"/>
</dbReference>
<dbReference type="FunFam" id="2.30.180.10:FF:000038">
    <property type="entry name" value="fasciclin-1 isoform X2"/>
    <property type="match status" value="1"/>
</dbReference>
<dbReference type="FunFam" id="2.30.180.10:FF:000035">
    <property type="entry name" value="fasciclin-1 isoform X5"/>
    <property type="match status" value="1"/>
</dbReference>
<dbReference type="Gene3D" id="2.30.180.10">
    <property type="entry name" value="FAS1 domain"/>
    <property type="match status" value="4"/>
</dbReference>
<dbReference type="InterPro" id="IPR050904">
    <property type="entry name" value="Adhesion/Biosynth-related"/>
</dbReference>
<dbReference type="InterPro" id="IPR036378">
    <property type="entry name" value="FAS1_dom_sf"/>
</dbReference>
<dbReference type="InterPro" id="IPR000782">
    <property type="entry name" value="FAS1_domain"/>
</dbReference>
<dbReference type="PANTHER" id="PTHR10900:SF120">
    <property type="entry name" value="MUCIN-5AC-RELATED"/>
    <property type="match status" value="1"/>
</dbReference>
<dbReference type="PANTHER" id="PTHR10900">
    <property type="entry name" value="PERIOSTIN-RELATED"/>
    <property type="match status" value="1"/>
</dbReference>
<dbReference type="Pfam" id="PF02469">
    <property type="entry name" value="Fasciclin"/>
    <property type="match status" value="4"/>
</dbReference>
<dbReference type="SMART" id="SM00554">
    <property type="entry name" value="FAS1"/>
    <property type="match status" value="4"/>
</dbReference>
<dbReference type="SUPFAM" id="SSF82153">
    <property type="entry name" value="FAS1 domain"/>
    <property type="match status" value="4"/>
</dbReference>
<dbReference type="PROSITE" id="PS50213">
    <property type="entry name" value="FAS1"/>
    <property type="match status" value="4"/>
</dbReference>
<organism>
    <name type="scientific">Drosophila melanogaster</name>
    <name type="common">Fruit fly</name>
    <dbReference type="NCBI Taxonomy" id="7227"/>
    <lineage>
        <taxon>Eukaryota</taxon>
        <taxon>Metazoa</taxon>
        <taxon>Ecdysozoa</taxon>
        <taxon>Arthropoda</taxon>
        <taxon>Hexapoda</taxon>
        <taxon>Insecta</taxon>
        <taxon>Pterygota</taxon>
        <taxon>Neoptera</taxon>
        <taxon>Endopterygota</taxon>
        <taxon>Diptera</taxon>
        <taxon>Brachycera</taxon>
        <taxon>Muscomorpha</taxon>
        <taxon>Ephydroidea</taxon>
        <taxon>Drosophilidae</taxon>
        <taxon>Drosophila</taxon>
        <taxon>Sophophora</taxon>
    </lineage>
</organism>
<keyword id="KW-0002">3D-structure</keyword>
<keyword id="KW-0025">Alternative splicing</keyword>
<keyword id="KW-0130">Cell adhesion</keyword>
<keyword id="KW-1003">Cell membrane</keyword>
<keyword id="KW-0325">Glycoprotein</keyword>
<keyword id="KW-0336">GPI-anchor</keyword>
<keyword id="KW-0449">Lipoprotein</keyword>
<keyword id="KW-0472">Membrane</keyword>
<keyword id="KW-1185">Reference proteome</keyword>
<keyword id="KW-0677">Repeat</keyword>
<keyword id="KW-0732">Signal</keyword>
<sequence length="652" mass="72599">MLNAAALLLALLCAANAAAAADLADKLRDDSELSQFYSLLESNQIANSTLSLRSCTIFVPTNEAFQRYKSKTAHVLYHITTEAYTQKRLPNTVSSDMAGNPPLYITKNSNGDIFVNNARIIPSLSVETNSDGKRQIMHIIDEVLEPLTVKAGHSDTPNNPNALKFLKNAEEFNVDNIGVRTYRSQVTMAKKESVYDAAGQHTFLVPVDEGFKLSARSSLVDGKVIDGHVIPNTVIFTAAAQHDDPKASAAFEDLLKVTVSFFKQKNGKMYVKSNTIVGDAKHRVGVVLAEIVKANIPVSNGVVHLIHRPLMIIDTTVTQFLQSFKENAENGALRKFYEVIMDNGGAVLDDINSLTEVTILAPSNEAWNSSNINNVLRDRNKMRQILNMHIIKDRLNVDKIRQKNANLIAQVPTVNNNTFLYFNVRGEGSDTVITVEGGGVNATVIQADVAQTNGYVHIIDHVLGVPYTTVLGKLESDPMMSDTYKMGKFSHFNDQLNNTQRRFTYFVPRDKGWQKTELDYPSAHKKLFMADFSYHSKSILERHLAISDKEYTMKDLVKFSQESGSVILPTFRDSLSIRVEEEAGRYVIIWNYKKINVYRPDVECTNGIIHVIDYPLLEEKDVVVAGGSYLPESSICIILANLIMITVAKFLN</sequence>
<reference key="1">
    <citation type="journal article" date="1988" name="Cell">
        <title>Sequence analysis and neuronal expression of fasciclin I in grasshopper and Drosophila.</title>
        <authorList>
            <person name="Zinn K."/>
            <person name="McAllister L."/>
            <person name="Goodman C."/>
        </authorList>
    </citation>
    <scope>NUCLEOTIDE SEQUENCE [MRNA]</scope>
</reference>
<reference key="2">
    <citation type="journal article" date="1992" name="J. Neurosci.">
        <title>Alternative splicing of micro-exons creates multiple forms of the insect cell adhesion molecule fasciclin I.</title>
        <authorList>
            <person name="McAllister L."/>
            <person name="Rehm E.J."/>
            <person name="Goodman G.S."/>
            <person name="Zinn K."/>
        </authorList>
    </citation>
    <scope>NUCLEOTIDE SEQUENCE [GENOMIC DNA]</scope>
    <scope>ALTERNATIVE SPLICING</scope>
</reference>
<reference key="3">
    <citation type="journal article" date="2000" name="Science">
        <title>The genome sequence of Drosophila melanogaster.</title>
        <authorList>
            <person name="Adams M.D."/>
            <person name="Celniker S.E."/>
            <person name="Holt R.A."/>
            <person name="Evans C.A."/>
            <person name="Gocayne J.D."/>
            <person name="Amanatides P.G."/>
            <person name="Scherer S.E."/>
            <person name="Li P.W."/>
            <person name="Hoskins R.A."/>
            <person name="Galle R.F."/>
            <person name="George R.A."/>
            <person name="Lewis S.E."/>
            <person name="Richards S."/>
            <person name="Ashburner M."/>
            <person name="Henderson S.N."/>
            <person name="Sutton G.G."/>
            <person name="Wortman J.R."/>
            <person name="Yandell M.D."/>
            <person name="Zhang Q."/>
            <person name="Chen L.X."/>
            <person name="Brandon R.C."/>
            <person name="Rogers Y.-H.C."/>
            <person name="Blazej R.G."/>
            <person name="Champe M."/>
            <person name="Pfeiffer B.D."/>
            <person name="Wan K.H."/>
            <person name="Doyle C."/>
            <person name="Baxter E.G."/>
            <person name="Helt G."/>
            <person name="Nelson C.R."/>
            <person name="Miklos G.L.G."/>
            <person name="Abril J.F."/>
            <person name="Agbayani A."/>
            <person name="An H.-J."/>
            <person name="Andrews-Pfannkoch C."/>
            <person name="Baldwin D."/>
            <person name="Ballew R.M."/>
            <person name="Basu A."/>
            <person name="Baxendale J."/>
            <person name="Bayraktaroglu L."/>
            <person name="Beasley E.M."/>
            <person name="Beeson K.Y."/>
            <person name="Benos P.V."/>
            <person name="Berman B.P."/>
            <person name="Bhandari D."/>
            <person name="Bolshakov S."/>
            <person name="Borkova D."/>
            <person name="Botchan M.R."/>
            <person name="Bouck J."/>
            <person name="Brokstein P."/>
            <person name="Brottier P."/>
            <person name="Burtis K.C."/>
            <person name="Busam D.A."/>
            <person name="Butler H."/>
            <person name="Cadieu E."/>
            <person name="Center A."/>
            <person name="Chandra I."/>
            <person name="Cherry J.M."/>
            <person name="Cawley S."/>
            <person name="Dahlke C."/>
            <person name="Davenport L.B."/>
            <person name="Davies P."/>
            <person name="de Pablos B."/>
            <person name="Delcher A."/>
            <person name="Deng Z."/>
            <person name="Mays A.D."/>
            <person name="Dew I."/>
            <person name="Dietz S.M."/>
            <person name="Dodson K."/>
            <person name="Doup L.E."/>
            <person name="Downes M."/>
            <person name="Dugan-Rocha S."/>
            <person name="Dunkov B.C."/>
            <person name="Dunn P."/>
            <person name="Durbin K.J."/>
            <person name="Evangelista C.C."/>
            <person name="Ferraz C."/>
            <person name="Ferriera S."/>
            <person name="Fleischmann W."/>
            <person name="Fosler C."/>
            <person name="Gabrielian A.E."/>
            <person name="Garg N.S."/>
            <person name="Gelbart W.M."/>
            <person name="Glasser K."/>
            <person name="Glodek A."/>
            <person name="Gong F."/>
            <person name="Gorrell J.H."/>
            <person name="Gu Z."/>
            <person name="Guan P."/>
            <person name="Harris M."/>
            <person name="Harris N.L."/>
            <person name="Harvey D.A."/>
            <person name="Heiman T.J."/>
            <person name="Hernandez J.R."/>
            <person name="Houck J."/>
            <person name="Hostin D."/>
            <person name="Houston K.A."/>
            <person name="Howland T.J."/>
            <person name="Wei M.-H."/>
            <person name="Ibegwam C."/>
            <person name="Jalali M."/>
            <person name="Kalush F."/>
            <person name="Karpen G.H."/>
            <person name="Ke Z."/>
            <person name="Kennison J.A."/>
            <person name="Ketchum K.A."/>
            <person name="Kimmel B.E."/>
            <person name="Kodira C.D."/>
            <person name="Kraft C.L."/>
            <person name="Kravitz S."/>
            <person name="Kulp D."/>
            <person name="Lai Z."/>
            <person name="Lasko P."/>
            <person name="Lei Y."/>
            <person name="Levitsky A.A."/>
            <person name="Li J.H."/>
            <person name="Li Z."/>
            <person name="Liang Y."/>
            <person name="Lin X."/>
            <person name="Liu X."/>
            <person name="Mattei B."/>
            <person name="McIntosh T.C."/>
            <person name="McLeod M.P."/>
            <person name="McPherson D."/>
            <person name="Merkulov G."/>
            <person name="Milshina N.V."/>
            <person name="Mobarry C."/>
            <person name="Morris J."/>
            <person name="Moshrefi A."/>
            <person name="Mount S.M."/>
            <person name="Moy M."/>
            <person name="Murphy B."/>
            <person name="Murphy L."/>
            <person name="Muzny D.M."/>
            <person name="Nelson D.L."/>
            <person name="Nelson D.R."/>
            <person name="Nelson K.A."/>
            <person name="Nixon K."/>
            <person name="Nusskern D.R."/>
            <person name="Pacleb J.M."/>
            <person name="Palazzolo M."/>
            <person name="Pittman G.S."/>
            <person name="Pan S."/>
            <person name="Pollard J."/>
            <person name="Puri V."/>
            <person name="Reese M.G."/>
            <person name="Reinert K."/>
            <person name="Remington K."/>
            <person name="Saunders R.D.C."/>
            <person name="Scheeler F."/>
            <person name="Shen H."/>
            <person name="Shue B.C."/>
            <person name="Siden-Kiamos I."/>
            <person name="Simpson M."/>
            <person name="Skupski M.P."/>
            <person name="Smith T.J."/>
            <person name="Spier E."/>
            <person name="Spradling A.C."/>
            <person name="Stapleton M."/>
            <person name="Strong R."/>
            <person name="Sun E."/>
            <person name="Svirskas R."/>
            <person name="Tector C."/>
            <person name="Turner R."/>
            <person name="Venter E."/>
            <person name="Wang A.H."/>
            <person name="Wang X."/>
            <person name="Wang Z.-Y."/>
            <person name="Wassarman D.A."/>
            <person name="Weinstock G.M."/>
            <person name="Weissenbach J."/>
            <person name="Williams S.M."/>
            <person name="Woodage T."/>
            <person name="Worley K.C."/>
            <person name="Wu D."/>
            <person name="Yang S."/>
            <person name="Yao Q.A."/>
            <person name="Ye J."/>
            <person name="Yeh R.-F."/>
            <person name="Zaveri J.S."/>
            <person name="Zhan M."/>
            <person name="Zhang G."/>
            <person name="Zhao Q."/>
            <person name="Zheng L."/>
            <person name="Zheng X.H."/>
            <person name="Zhong F.N."/>
            <person name="Zhong W."/>
            <person name="Zhou X."/>
            <person name="Zhu S.C."/>
            <person name="Zhu X."/>
            <person name="Smith H.O."/>
            <person name="Gibbs R.A."/>
            <person name="Myers E.W."/>
            <person name="Rubin G.M."/>
            <person name="Venter J.C."/>
        </authorList>
    </citation>
    <scope>NUCLEOTIDE SEQUENCE [LARGE SCALE GENOMIC DNA]</scope>
    <source>
        <strain>Berkeley</strain>
    </source>
</reference>
<reference key="4">
    <citation type="journal article" date="2002" name="Genome Biol.">
        <title>Annotation of the Drosophila melanogaster euchromatic genome: a systematic review.</title>
        <authorList>
            <person name="Misra S."/>
            <person name="Crosby M.A."/>
            <person name="Mungall C.J."/>
            <person name="Matthews B.B."/>
            <person name="Campbell K.S."/>
            <person name="Hradecky P."/>
            <person name="Huang Y."/>
            <person name="Kaminker J.S."/>
            <person name="Millburn G.H."/>
            <person name="Prochnik S.E."/>
            <person name="Smith C.D."/>
            <person name="Tupy J.L."/>
            <person name="Whitfield E.J."/>
            <person name="Bayraktaroglu L."/>
            <person name="Berman B.P."/>
            <person name="Bettencourt B.R."/>
            <person name="Celniker S.E."/>
            <person name="de Grey A.D.N.J."/>
            <person name="Drysdale R.A."/>
            <person name="Harris N.L."/>
            <person name="Richter J."/>
            <person name="Russo S."/>
            <person name="Schroeder A.J."/>
            <person name="Shu S.Q."/>
            <person name="Stapleton M."/>
            <person name="Yamada C."/>
            <person name="Ashburner M."/>
            <person name="Gelbart W.M."/>
            <person name="Rubin G.M."/>
            <person name="Lewis S.E."/>
        </authorList>
    </citation>
    <scope>GENOME REANNOTATION</scope>
    <source>
        <strain>Berkeley</strain>
    </source>
</reference>
<reference key="5">
    <citation type="journal article" date="1990" name="J. Biol. Chem.">
        <title>Drosophila fasciclin I, a neural cell adhesion molecule, has a phosphatidylinositol lipid membrane anchor that is developmentally regulated.</title>
        <authorList>
            <person name="Hortsch M."/>
            <person name="Goodman C.S."/>
        </authorList>
    </citation>
    <scope>GPI-ANCHOR</scope>
</reference>
<reference key="6">
    <citation type="journal article" date="2007" name="Glycobiology">
        <title>Identification of N-glycosylated proteins from the central nervous system of Drosophila melanogaster.</title>
        <authorList>
            <person name="Koles K."/>
            <person name="Lim J.-M."/>
            <person name="Aoki K."/>
            <person name="Porterfield M."/>
            <person name="Tiemeyer M."/>
            <person name="Wells L."/>
            <person name="Panin V."/>
        </authorList>
    </citation>
    <scope>GLYCOSYLATION [LARGE SCALE ANALYSIS] AT ASN-497</scope>
    <scope>IDENTIFICATION BY MASS SPECTROMETRY</scope>
    <source>
        <strain>Oregon-R</strain>
        <tissue>Head</tissue>
    </source>
</reference>
<reference key="7">
    <citation type="journal article" date="2009" name="Nat. Biotechnol.">
        <title>Mass-spectrometric identification and relative quantification of N-linked cell surface glycoproteins.</title>
        <authorList>
            <person name="Wollscheid B."/>
            <person name="Bausch-Fluck D."/>
            <person name="Henderson C."/>
            <person name="O'Brien R."/>
            <person name="Bibel M."/>
            <person name="Schiess R."/>
            <person name="Aebersold R."/>
            <person name="Watts J.D."/>
        </authorList>
    </citation>
    <scope>GLYCOSYLATION [LARGE SCALE ANALYSIS] AT ASN-497</scope>
    <scope>IDENTIFICATION BY MASS SPECTROMETRY</scope>
</reference>
<reference key="8">
    <citation type="journal article" date="2003" name="Structure">
        <title>Novel fold revealed by the structure of a FAS1 domain pair from the insect cell adhesion molecule fasciclin I.</title>
        <authorList>
            <person name="Clout N.J."/>
            <person name="Tisi D."/>
            <person name="Hohenester E."/>
        </authorList>
    </citation>
    <scope>X-RAY CRYSTALLOGRAPHY (2.6 ANGSTROMS) OF 314-628</scope>
    <scope>GLYCOSYLATION AT ASN-441</scope>
</reference>
<feature type="signal peptide" evidence="1">
    <location>
        <begin position="1"/>
        <end position="21"/>
    </location>
</feature>
<feature type="chain" id="PRO_0000008772" description="Fasciclin-1">
    <location>
        <begin position="22"/>
        <end position="625"/>
    </location>
</feature>
<feature type="propeptide" id="PRO_0000008773" description="Removed in mature form" evidence="1">
    <location>
        <begin position="626"/>
        <end position="652"/>
    </location>
</feature>
<feature type="domain" description="FAS1 1" evidence="2">
    <location>
        <begin position="22"/>
        <end position="144"/>
    </location>
</feature>
<feature type="domain" description="FAS1 2" evidence="2">
    <location>
        <begin position="166"/>
        <end position="310"/>
    </location>
</feature>
<feature type="domain" description="FAS1 3" evidence="2">
    <location>
        <begin position="317"/>
        <end position="463"/>
    </location>
</feature>
<feature type="domain" description="FAS1 4" evidence="2">
    <location>
        <begin position="467"/>
        <end position="616"/>
    </location>
</feature>
<feature type="lipid moiety-binding region" description="GPI-anchor amidated alanine" evidence="1">
    <location>
        <position position="625"/>
    </location>
</feature>
<feature type="glycosylation site" description="N-linked (GlcNAc...) asparagine" evidence="1">
    <location>
        <position position="47"/>
    </location>
</feature>
<feature type="glycosylation site" description="N-linked (GlcNAc...) asparagine" evidence="1">
    <location>
        <position position="368"/>
    </location>
</feature>
<feature type="glycosylation site" description="N-linked (GlcNAc...) asparagine" evidence="1">
    <location>
        <position position="416"/>
    </location>
</feature>
<feature type="glycosylation site" description="N-linked (GlcNAc...) asparagine" evidence="3">
    <location>
        <position position="441"/>
    </location>
</feature>
<feature type="glycosylation site" description="N-linked (GlcNAc...) asparagine" evidence="5 6">
    <location>
        <position position="497"/>
    </location>
</feature>
<feature type="helix" evidence="7">
    <location>
        <begin position="330"/>
        <end position="342"/>
    </location>
</feature>
<feature type="helix" evidence="7">
    <location>
        <begin position="346"/>
        <end position="352"/>
    </location>
</feature>
<feature type="strand" evidence="7">
    <location>
        <begin position="355"/>
        <end position="362"/>
    </location>
</feature>
<feature type="helix" evidence="7">
    <location>
        <begin position="364"/>
        <end position="369"/>
    </location>
</feature>
<feature type="helix" evidence="7">
    <location>
        <begin position="373"/>
        <end position="376"/>
    </location>
</feature>
<feature type="helix" evidence="7">
    <location>
        <begin position="379"/>
        <end position="388"/>
    </location>
</feature>
<feature type="strand" evidence="7">
    <location>
        <begin position="390"/>
        <end position="393"/>
    </location>
</feature>
<feature type="helix" evidence="7">
    <location>
        <begin position="397"/>
        <end position="403"/>
    </location>
</feature>
<feature type="strand" evidence="7">
    <location>
        <begin position="405"/>
        <end position="407"/>
    </location>
</feature>
<feature type="strand" evidence="7">
    <location>
        <begin position="411"/>
        <end position="415"/>
    </location>
</feature>
<feature type="strand" evidence="7">
    <location>
        <begin position="419"/>
        <end position="426"/>
    </location>
</feature>
<feature type="helix" evidence="7">
    <location>
        <begin position="428"/>
        <end position="430"/>
    </location>
</feature>
<feature type="strand" evidence="7">
    <location>
        <begin position="432"/>
        <end position="437"/>
    </location>
</feature>
<feature type="strand" evidence="7">
    <location>
        <begin position="440"/>
        <end position="450"/>
    </location>
</feature>
<feature type="strand" evidence="7">
    <location>
        <begin position="452"/>
        <end position="461"/>
    </location>
</feature>
<feature type="helix" evidence="7">
    <location>
        <begin position="470"/>
        <end position="476"/>
    </location>
</feature>
<feature type="helix" evidence="7">
    <location>
        <begin position="478"/>
        <end position="480"/>
    </location>
</feature>
<feature type="helix" evidence="7">
    <location>
        <begin position="481"/>
        <end position="486"/>
    </location>
</feature>
<feature type="turn" evidence="7">
    <location>
        <begin position="487"/>
        <end position="491"/>
    </location>
</feature>
<feature type="helix" evidence="7">
    <location>
        <begin position="494"/>
        <end position="497"/>
    </location>
</feature>
<feature type="strand" evidence="7">
    <location>
        <begin position="499"/>
        <end position="508"/>
    </location>
</feature>
<feature type="helix" evidence="7">
    <location>
        <begin position="510"/>
        <end position="519"/>
    </location>
</feature>
<feature type="helix" evidence="7">
    <location>
        <begin position="521"/>
        <end position="527"/>
    </location>
</feature>
<feature type="helix" evidence="7">
    <location>
        <begin position="530"/>
        <end position="532"/>
    </location>
</feature>
<feature type="helix" evidence="7">
    <location>
        <begin position="533"/>
        <end position="541"/>
    </location>
</feature>
<feature type="strand" evidence="7">
    <location>
        <begin position="544"/>
        <end position="549"/>
    </location>
</feature>
<feature type="helix" evidence="7">
    <location>
        <begin position="553"/>
        <end position="562"/>
    </location>
</feature>
<feature type="strand" evidence="7">
    <location>
        <begin position="563"/>
        <end position="569"/>
    </location>
</feature>
<feature type="strand" evidence="7">
    <location>
        <begin position="571"/>
        <end position="582"/>
    </location>
</feature>
<feature type="strand" evidence="7">
    <location>
        <begin position="585"/>
        <end position="590"/>
    </location>
</feature>
<feature type="strand" evidence="7">
    <location>
        <begin position="593"/>
        <end position="604"/>
    </location>
</feature>
<feature type="strand" evidence="7">
    <location>
        <begin position="607"/>
        <end position="614"/>
    </location>
</feature>
<feature type="turn" evidence="7">
    <location>
        <begin position="619"/>
        <end position="622"/>
    </location>
</feature>
<gene>
    <name type="primary">Fas1</name>
    <name type="ORF">CG6588</name>
</gene>
<protein>
    <recommendedName>
        <fullName>Fasciclin-1</fullName>
    </recommendedName>
    <alternativeName>
        <fullName>Fasciclin I</fullName>
        <shortName>FAS I</shortName>
        <shortName>FCN</shortName>
    </alternativeName>
</protein>